<keyword id="KW-0056">Arginine metabolism</keyword>
<keyword id="KW-0378">Hydrolase</keyword>
<feature type="chain" id="PRO_0000262371" description="N-succinylarginine dihydrolase">
    <location>
        <begin position="1"/>
        <end position="447"/>
    </location>
</feature>
<feature type="active site" evidence="1">
    <location>
        <position position="174"/>
    </location>
</feature>
<feature type="active site" evidence="1">
    <location>
        <position position="248"/>
    </location>
</feature>
<feature type="active site" description="Nucleophile" evidence="1">
    <location>
        <position position="365"/>
    </location>
</feature>
<feature type="binding site" evidence="1">
    <location>
        <begin position="19"/>
        <end position="28"/>
    </location>
    <ligand>
        <name>substrate</name>
    </ligand>
</feature>
<feature type="binding site" evidence="1">
    <location>
        <position position="110"/>
    </location>
    <ligand>
        <name>substrate</name>
    </ligand>
</feature>
<feature type="binding site" evidence="1">
    <location>
        <begin position="137"/>
        <end position="138"/>
    </location>
    <ligand>
        <name>substrate</name>
    </ligand>
</feature>
<feature type="binding site" evidence="1">
    <location>
        <position position="212"/>
    </location>
    <ligand>
        <name>substrate</name>
    </ligand>
</feature>
<feature type="binding site" evidence="1">
    <location>
        <position position="250"/>
    </location>
    <ligand>
        <name>substrate</name>
    </ligand>
</feature>
<feature type="binding site" evidence="1">
    <location>
        <position position="359"/>
    </location>
    <ligand>
        <name>substrate</name>
    </ligand>
</feature>
<protein>
    <recommendedName>
        <fullName evidence="1">N-succinylarginine dihydrolase</fullName>
        <ecNumber evidence="1">3.5.3.23</ecNumber>
    </recommendedName>
</protein>
<accession>Q5PHC1</accession>
<proteinExistence type="inferred from homology"/>
<name>ASTB_SALPA</name>
<sequence length="447" mass="49135">MTAHEVNFDGLVGLTHHYAGLSFGNEASTRHRFQVSNPRLAVKQGLLKMKALADAGFPQAVIPPHERPFIPALRQLGFTGSDEQILDKVARQAPRWLSSVSSASPMWVANAATVCPSADALDGKVHLTVANLNNKFHRALEAPVTEALLRAIFRDESQFSVHSALPQVALLGDEGAANHNRLGGEYGSAGVQLFVYGREEENEIRPARYPARQSREASEAVARLNQVNPQQVIFAQQNPEVIDQGVFHNDVIAVSNRQVLFCHEAAFARQKVLINQLRTRVDGFMAIEVPAGEVSVSDAVAPYLFNSQLLSRDDGSMLLVLPRECQDHAGVWRYLNKLVAEDNPISAMQVFDLRESMANGGGPACLRLRVVLTEEERRAVNPAVMMNDALFTALNAWADRYYRDRLTAADLADPLLLREGREALDVLTRLLDLGSVYPFQQTGAADG</sequence>
<gene>
    <name evidence="1" type="primary">astB</name>
    <name type="ordered locus">SPA1538</name>
</gene>
<evidence type="ECO:0000255" key="1">
    <source>
        <dbReference type="HAMAP-Rule" id="MF_01172"/>
    </source>
</evidence>
<organism>
    <name type="scientific">Salmonella paratyphi A (strain ATCC 9150 / SARB42)</name>
    <dbReference type="NCBI Taxonomy" id="295319"/>
    <lineage>
        <taxon>Bacteria</taxon>
        <taxon>Pseudomonadati</taxon>
        <taxon>Pseudomonadota</taxon>
        <taxon>Gammaproteobacteria</taxon>
        <taxon>Enterobacterales</taxon>
        <taxon>Enterobacteriaceae</taxon>
        <taxon>Salmonella</taxon>
    </lineage>
</organism>
<dbReference type="EC" id="3.5.3.23" evidence="1"/>
<dbReference type="EMBL" id="CP000026">
    <property type="protein sequence ID" value="AAV77471.1"/>
    <property type="molecule type" value="Genomic_DNA"/>
</dbReference>
<dbReference type="RefSeq" id="WP_000123946.1">
    <property type="nucleotide sequence ID" value="NC_006511.1"/>
</dbReference>
<dbReference type="SMR" id="Q5PHC1"/>
<dbReference type="KEGG" id="spt:SPA1538"/>
<dbReference type="HOGENOM" id="CLU_053835_0_0_6"/>
<dbReference type="UniPathway" id="UPA00185">
    <property type="reaction ID" value="UER00280"/>
</dbReference>
<dbReference type="Proteomes" id="UP000008185">
    <property type="component" value="Chromosome"/>
</dbReference>
<dbReference type="GO" id="GO:0009015">
    <property type="term" value="F:N-succinylarginine dihydrolase activity"/>
    <property type="evidence" value="ECO:0007669"/>
    <property type="project" value="UniProtKB-UniRule"/>
</dbReference>
<dbReference type="GO" id="GO:0019544">
    <property type="term" value="P:arginine catabolic process to glutamate"/>
    <property type="evidence" value="ECO:0007669"/>
    <property type="project" value="UniProtKB-UniRule"/>
</dbReference>
<dbReference type="GO" id="GO:0019545">
    <property type="term" value="P:arginine catabolic process to succinate"/>
    <property type="evidence" value="ECO:0007669"/>
    <property type="project" value="UniProtKB-UniRule"/>
</dbReference>
<dbReference type="FunFam" id="3.75.10.20:FF:000001">
    <property type="entry name" value="N-succinylarginine dihydrolase"/>
    <property type="match status" value="1"/>
</dbReference>
<dbReference type="Gene3D" id="3.75.10.20">
    <property type="entry name" value="Succinylarginine dihydrolase"/>
    <property type="match status" value="1"/>
</dbReference>
<dbReference type="HAMAP" id="MF_01172">
    <property type="entry name" value="AstB"/>
    <property type="match status" value="1"/>
</dbReference>
<dbReference type="InterPro" id="IPR037031">
    <property type="entry name" value="AstB_sf"/>
</dbReference>
<dbReference type="InterPro" id="IPR007079">
    <property type="entry name" value="SuccinylArg_d-Hdrlase_AstB"/>
</dbReference>
<dbReference type="NCBIfam" id="TIGR03241">
    <property type="entry name" value="arg_catab_astB"/>
    <property type="match status" value="1"/>
</dbReference>
<dbReference type="NCBIfam" id="NF009789">
    <property type="entry name" value="PRK13281.1"/>
    <property type="match status" value="1"/>
</dbReference>
<dbReference type="PANTHER" id="PTHR30420">
    <property type="entry name" value="N-SUCCINYLARGININE DIHYDROLASE"/>
    <property type="match status" value="1"/>
</dbReference>
<dbReference type="PANTHER" id="PTHR30420:SF2">
    <property type="entry name" value="N-SUCCINYLARGININE DIHYDROLASE"/>
    <property type="match status" value="1"/>
</dbReference>
<dbReference type="Pfam" id="PF04996">
    <property type="entry name" value="AstB"/>
    <property type="match status" value="1"/>
</dbReference>
<dbReference type="SUPFAM" id="SSF55909">
    <property type="entry name" value="Pentein"/>
    <property type="match status" value="1"/>
</dbReference>
<reference key="1">
    <citation type="journal article" date="2004" name="Nat. Genet.">
        <title>Comparison of genome degradation in Paratyphi A and Typhi, human-restricted serovars of Salmonella enterica that cause typhoid.</title>
        <authorList>
            <person name="McClelland M."/>
            <person name="Sanderson K.E."/>
            <person name="Clifton S.W."/>
            <person name="Latreille P."/>
            <person name="Porwollik S."/>
            <person name="Sabo A."/>
            <person name="Meyer R."/>
            <person name="Bieri T."/>
            <person name="Ozersky P."/>
            <person name="McLellan M."/>
            <person name="Harkins C.R."/>
            <person name="Wang C."/>
            <person name="Nguyen C."/>
            <person name="Berghoff A."/>
            <person name="Elliott G."/>
            <person name="Kohlberg S."/>
            <person name="Strong C."/>
            <person name="Du F."/>
            <person name="Carter J."/>
            <person name="Kremizki C."/>
            <person name="Layman D."/>
            <person name="Leonard S."/>
            <person name="Sun H."/>
            <person name="Fulton L."/>
            <person name="Nash W."/>
            <person name="Miner T."/>
            <person name="Minx P."/>
            <person name="Delehaunty K."/>
            <person name="Fronick C."/>
            <person name="Magrini V."/>
            <person name="Nhan M."/>
            <person name="Warren W."/>
            <person name="Florea L."/>
            <person name="Spieth J."/>
            <person name="Wilson R.K."/>
        </authorList>
    </citation>
    <scope>NUCLEOTIDE SEQUENCE [LARGE SCALE GENOMIC DNA]</scope>
    <source>
        <strain>ATCC 9150 / SARB42</strain>
    </source>
</reference>
<comment type="function">
    <text evidence="1">Catalyzes the hydrolysis of N(2)-succinylarginine into N(2)-succinylornithine, ammonia and CO(2).</text>
</comment>
<comment type="catalytic activity">
    <reaction evidence="1">
        <text>N(2)-succinyl-L-arginine + 2 H2O + 2 H(+) = N(2)-succinyl-L-ornithine + 2 NH4(+) + CO2</text>
        <dbReference type="Rhea" id="RHEA:19533"/>
        <dbReference type="ChEBI" id="CHEBI:15377"/>
        <dbReference type="ChEBI" id="CHEBI:15378"/>
        <dbReference type="ChEBI" id="CHEBI:16526"/>
        <dbReference type="ChEBI" id="CHEBI:28938"/>
        <dbReference type="ChEBI" id="CHEBI:58241"/>
        <dbReference type="ChEBI" id="CHEBI:58514"/>
        <dbReference type="EC" id="3.5.3.23"/>
    </reaction>
</comment>
<comment type="pathway">
    <text evidence="1">Amino-acid degradation; L-arginine degradation via AST pathway; L-glutamate and succinate from L-arginine: step 2/5.</text>
</comment>
<comment type="subunit">
    <text evidence="1">Homodimer.</text>
</comment>
<comment type="similarity">
    <text evidence="1">Belongs to the succinylarginine dihydrolase family.</text>
</comment>